<keyword id="KW-0963">Cytoplasm</keyword>
<keyword id="KW-0369">Histidine metabolism</keyword>
<keyword id="KW-0378">Hydrolase</keyword>
<keyword id="KW-0408">Iron</keyword>
<keyword id="KW-0479">Metal-binding</keyword>
<keyword id="KW-1185">Reference proteome</keyword>
<keyword id="KW-0862">Zinc</keyword>
<proteinExistence type="inferred from homology"/>
<protein>
    <recommendedName>
        <fullName evidence="1">Imidazolonepropionase</fullName>
        <ecNumber evidence="1">3.5.2.7</ecNumber>
    </recommendedName>
    <alternativeName>
        <fullName evidence="1">Imidazolone-5-propionate hydrolase</fullName>
    </alternativeName>
</protein>
<evidence type="ECO:0000255" key="1">
    <source>
        <dbReference type="HAMAP-Rule" id="MF_00372"/>
    </source>
</evidence>
<gene>
    <name evidence="1" type="primary">hutI</name>
    <name type="ordered locus">BAB2_0306</name>
</gene>
<dbReference type="EC" id="3.5.2.7" evidence="1"/>
<dbReference type="EMBL" id="AM040265">
    <property type="protein sequence ID" value="CAJ12472.1"/>
    <property type="molecule type" value="Genomic_DNA"/>
</dbReference>
<dbReference type="RefSeq" id="WP_002965718.1">
    <property type="nucleotide sequence ID" value="NZ_KN046823.1"/>
</dbReference>
<dbReference type="SMR" id="Q2YIL5"/>
<dbReference type="STRING" id="359391.BAB2_0306"/>
<dbReference type="GeneID" id="93015750"/>
<dbReference type="KEGG" id="bmf:BAB2_0306"/>
<dbReference type="PATRIC" id="fig|359391.11.peg.2260"/>
<dbReference type="HOGENOM" id="CLU_041647_0_0_5"/>
<dbReference type="PhylomeDB" id="Q2YIL5"/>
<dbReference type="UniPathway" id="UPA00379">
    <property type="reaction ID" value="UER00551"/>
</dbReference>
<dbReference type="Proteomes" id="UP000002719">
    <property type="component" value="Chromosome II"/>
</dbReference>
<dbReference type="GO" id="GO:0005737">
    <property type="term" value="C:cytoplasm"/>
    <property type="evidence" value="ECO:0007669"/>
    <property type="project" value="UniProtKB-SubCell"/>
</dbReference>
<dbReference type="GO" id="GO:0050480">
    <property type="term" value="F:imidazolonepropionase activity"/>
    <property type="evidence" value="ECO:0007669"/>
    <property type="project" value="UniProtKB-UniRule"/>
</dbReference>
<dbReference type="GO" id="GO:0005506">
    <property type="term" value="F:iron ion binding"/>
    <property type="evidence" value="ECO:0007669"/>
    <property type="project" value="UniProtKB-UniRule"/>
</dbReference>
<dbReference type="GO" id="GO:0008270">
    <property type="term" value="F:zinc ion binding"/>
    <property type="evidence" value="ECO:0007669"/>
    <property type="project" value="UniProtKB-UniRule"/>
</dbReference>
<dbReference type="GO" id="GO:0019556">
    <property type="term" value="P:L-histidine catabolic process to glutamate and formamide"/>
    <property type="evidence" value="ECO:0007669"/>
    <property type="project" value="UniProtKB-UniPathway"/>
</dbReference>
<dbReference type="GO" id="GO:0019557">
    <property type="term" value="P:L-histidine catabolic process to glutamate and formate"/>
    <property type="evidence" value="ECO:0007669"/>
    <property type="project" value="UniProtKB-UniPathway"/>
</dbReference>
<dbReference type="CDD" id="cd01296">
    <property type="entry name" value="Imidazolone-5PH"/>
    <property type="match status" value="1"/>
</dbReference>
<dbReference type="FunFam" id="3.20.20.140:FF:000007">
    <property type="entry name" value="Imidazolonepropionase"/>
    <property type="match status" value="1"/>
</dbReference>
<dbReference type="Gene3D" id="3.20.20.140">
    <property type="entry name" value="Metal-dependent hydrolases"/>
    <property type="match status" value="1"/>
</dbReference>
<dbReference type="Gene3D" id="2.30.40.10">
    <property type="entry name" value="Urease, subunit C, domain 1"/>
    <property type="match status" value="1"/>
</dbReference>
<dbReference type="HAMAP" id="MF_00372">
    <property type="entry name" value="HutI"/>
    <property type="match status" value="1"/>
</dbReference>
<dbReference type="InterPro" id="IPR006680">
    <property type="entry name" value="Amidohydro-rel"/>
</dbReference>
<dbReference type="InterPro" id="IPR005920">
    <property type="entry name" value="HutI"/>
</dbReference>
<dbReference type="InterPro" id="IPR011059">
    <property type="entry name" value="Metal-dep_hydrolase_composite"/>
</dbReference>
<dbReference type="InterPro" id="IPR032466">
    <property type="entry name" value="Metal_Hydrolase"/>
</dbReference>
<dbReference type="NCBIfam" id="TIGR01224">
    <property type="entry name" value="hutI"/>
    <property type="match status" value="1"/>
</dbReference>
<dbReference type="PANTHER" id="PTHR42752">
    <property type="entry name" value="IMIDAZOLONEPROPIONASE"/>
    <property type="match status" value="1"/>
</dbReference>
<dbReference type="PANTHER" id="PTHR42752:SF1">
    <property type="entry name" value="IMIDAZOLONEPROPIONASE-RELATED"/>
    <property type="match status" value="1"/>
</dbReference>
<dbReference type="Pfam" id="PF01979">
    <property type="entry name" value="Amidohydro_1"/>
    <property type="match status" value="1"/>
</dbReference>
<dbReference type="SUPFAM" id="SSF51338">
    <property type="entry name" value="Composite domain of metallo-dependent hydrolases"/>
    <property type="match status" value="1"/>
</dbReference>
<dbReference type="SUPFAM" id="SSF51556">
    <property type="entry name" value="Metallo-dependent hydrolases"/>
    <property type="match status" value="1"/>
</dbReference>
<name>HUTI_BRUA2</name>
<organism>
    <name type="scientific">Brucella abortus (strain 2308)</name>
    <dbReference type="NCBI Taxonomy" id="359391"/>
    <lineage>
        <taxon>Bacteria</taxon>
        <taxon>Pseudomonadati</taxon>
        <taxon>Pseudomonadota</taxon>
        <taxon>Alphaproteobacteria</taxon>
        <taxon>Hyphomicrobiales</taxon>
        <taxon>Brucellaceae</taxon>
        <taxon>Brucella/Ochrobactrum group</taxon>
        <taxon>Brucella</taxon>
    </lineage>
</organism>
<sequence length="405" mass="43520">MTKNSSTVFTHARIATLEEKAANLGLIEEAALVVKDARIVYAGPENKLPDEYASFEKIDCGNRLITPGLIDCHTHLVHAGNRAHEFELRLQGATYEEVARAGGGIVSSVRNLRAASEDDLVRETLPRLDALIAEGVTTVEVKSGYGLDRDSEIKSLKAARRLGEERDVAIRTTFLGAHALPPEMNGDKAAYIDRVINDMLPAIAEQGLADAVDGFCEGIAFLPDEIARVFDAAKAHDIPVKLHADQLSNLHGAALAASYGALSADHLEYTDADGAAAMASAGTVAVLLPGAYYFIRETQKPPVEAFRAAGTKMALATDNNPGTSPLTSLLLTMNMGATLFRMTVEECIAGVTREAARALGILDQTGTLEIGKDADLAIWDIERPAELVYRIGFNPLWKRVFKGQI</sequence>
<feature type="chain" id="PRO_0000306444" description="Imidazolonepropionase">
    <location>
        <begin position="1"/>
        <end position="405"/>
    </location>
</feature>
<feature type="binding site" evidence="1">
    <location>
        <position position="73"/>
    </location>
    <ligand>
        <name>Fe(3+)</name>
        <dbReference type="ChEBI" id="CHEBI:29034"/>
    </ligand>
</feature>
<feature type="binding site" evidence="1">
    <location>
        <position position="73"/>
    </location>
    <ligand>
        <name>Zn(2+)</name>
        <dbReference type="ChEBI" id="CHEBI:29105"/>
    </ligand>
</feature>
<feature type="binding site" evidence="1">
    <location>
        <position position="75"/>
    </location>
    <ligand>
        <name>Fe(3+)</name>
        <dbReference type="ChEBI" id="CHEBI:29034"/>
    </ligand>
</feature>
<feature type="binding site" evidence="1">
    <location>
        <position position="75"/>
    </location>
    <ligand>
        <name>Zn(2+)</name>
        <dbReference type="ChEBI" id="CHEBI:29105"/>
    </ligand>
</feature>
<feature type="binding site" evidence="1">
    <location>
        <position position="82"/>
    </location>
    <ligand>
        <name>4-imidazolone-5-propanoate</name>
        <dbReference type="ChEBI" id="CHEBI:77893"/>
    </ligand>
</feature>
<feature type="binding site" evidence="1">
    <location>
        <position position="145"/>
    </location>
    <ligand>
        <name>4-imidazolone-5-propanoate</name>
        <dbReference type="ChEBI" id="CHEBI:77893"/>
    </ligand>
</feature>
<feature type="binding site" evidence="1">
    <location>
        <position position="145"/>
    </location>
    <ligand>
        <name>N-formimidoyl-L-glutamate</name>
        <dbReference type="ChEBI" id="CHEBI:58928"/>
    </ligand>
</feature>
<feature type="binding site" evidence="1">
    <location>
        <position position="178"/>
    </location>
    <ligand>
        <name>4-imidazolone-5-propanoate</name>
        <dbReference type="ChEBI" id="CHEBI:77893"/>
    </ligand>
</feature>
<feature type="binding site" evidence="1">
    <location>
        <position position="243"/>
    </location>
    <ligand>
        <name>Fe(3+)</name>
        <dbReference type="ChEBI" id="CHEBI:29034"/>
    </ligand>
</feature>
<feature type="binding site" evidence="1">
    <location>
        <position position="243"/>
    </location>
    <ligand>
        <name>Zn(2+)</name>
        <dbReference type="ChEBI" id="CHEBI:29105"/>
    </ligand>
</feature>
<feature type="binding site" evidence="1">
    <location>
        <position position="246"/>
    </location>
    <ligand>
        <name>4-imidazolone-5-propanoate</name>
        <dbReference type="ChEBI" id="CHEBI:77893"/>
    </ligand>
</feature>
<feature type="binding site" evidence="1">
    <location>
        <position position="318"/>
    </location>
    <ligand>
        <name>Fe(3+)</name>
        <dbReference type="ChEBI" id="CHEBI:29034"/>
    </ligand>
</feature>
<feature type="binding site" evidence="1">
    <location>
        <position position="318"/>
    </location>
    <ligand>
        <name>Zn(2+)</name>
        <dbReference type="ChEBI" id="CHEBI:29105"/>
    </ligand>
</feature>
<feature type="binding site" evidence="1">
    <location>
        <position position="320"/>
    </location>
    <ligand>
        <name>N-formimidoyl-L-glutamate</name>
        <dbReference type="ChEBI" id="CHEBI:58928"/>
    </ligand>
</feature>
<feature type="binding site" evidence="1">
    <location>
        <position position="322"/>
    </location>
    <ligand>
        <name>N-formimidoyl-L-glutamate</name>
        <dbReference type="ChEBI" id="CHEBI:58928"/>
    </ligand>
</feature>
<feature type="binding site" evidence="1">
    <location>
        <position position="323"/>
    </location>
    <ligand>
        <name>4-imidazolone-5-propanoate</name>
        <dbReference type="ChEBI" id="CHEBI:77893"/>
    </ligand>
</feature>
<accession>Q2YIL5</accession>
<reference key="1">
    <citation type="journal article" date="2005" name="Infect. Immun.">
        <title>Whole-genome analyses of speciation events in pathogenic Brucellae.</title>
        <authorList>
            <person name="Chain P.S."/>
            <person name="Comerci D.J."/>
            <person name="Tolmasky M.E."/>
            <person name="Larimer F.W."/>
            <person name="Malfatti S.A."/>
            <person name="Vergez L.M."/>
            <person name="Aguero F."/>
            <person name="Land M.L."/>
            <person name="Ugalde R.A."/>
            <person name="Garcia E."/>
        </authorList>
    </citation>
    <scope>NUCLEOTIDE SEQUENCE [LARGE SCALE GENOMIC DNA]</scope>
    <source>
        <strain>2308</strain>
    </source>
</reference>
<comment type="function">
    <text evidence="1">Catalyzes the hydrolytic cleavage of the carbon-nitrogen bond in imidazolone-5-propanoate to yield N-formimidoyl-L-glutamate. It is the third step in the universal histidine degradation pathway.</text>
</comment>
<comment type="catalytic activity">
    <reaction evidence="1">
        <text>4-imidazolone-5-propanoate + H2O = N-formimidoyl-L-glutamate</text>
        <dbReference type="Rhea" id="RHEA:23660"/>
        <dbReference type="ChEBI" id="CHEBI:15377"/>
        <dbReference type="ChEBI" id="CHEBI:58928"/>
        <dbReference type="ChEBI" id="CHEBI:77893"/>
        <dbReference type="EC" id="3.5.2.7"/>
    </reaction>
</comment>
<comment type="cofactor">
    <cofactor evidence="1">
        <name>Zn(2+)</name>
        <dbReference type="ChEBI" id="CHEBI:29105"/>
    </cofactor>
    <cofactor evidence="1">
        <name>Fe(3+)</name>
        <dbReference type="ChEBI" id="CHEBI:29034"/>
    </cofactor>
    <text evidence="1">Binds 1 zinc or iron ion per subunit.</text>
</comment>
<comment type="pathway">
    <text evidence="1">Amino-acid degradation; L-histidine degradation into L-glutamate; N-formimidoyl-L-glutamate from L-histidine: step 3/3.</text>
</comment>
<comment type="subcellular location">
    <subcellularLocation>
        <location evidence="1">Cytoplasm</location>
    </subcellularLocation>
</comment>
<comment type="similarity">
    <text evidence="1">Belongs to the metallo-dependent hydrolases superfamily. HutI family.</text>
</comment>